<keyword id="KW-0903">Direct protein sequencing</keyword>
<keyword id="KW-0560">Oxidoreductase</keyword>
<keyword id="KW-0670">Pyruvate</keyword>
<keyword id="KW-1185">Reference proteome</keyword>
<gene>
    <name type="primary">grdE</name>
    <name type="ordered locus">CLOST_1110</name>
</gene>
<protein>
    <recommendedName>
        <fullName>Glycine reductase complex component B subunits alpha and beta</fullName>
        <ecNumber>1.21.4.2</ecNumber>
    </recommendedName>
    <alternativeName>
        <fullName>Selenoprotein PB alpha/beta</fullName>
    </alternativeName>
    <component>
        <recommendedName>
            <fullName>Betaine reductase component B subunit beta</fullName>
        </recommendedName>
    </component>
    <component>
        <recommendedName>
            <fullName>Betaine reductase component B subunit alpha</fullName>
        </recommendedName>
    </component>
</protein>
<proteinExistence type="evidence at protein level"/>
<evidence type="ECO:0000250" key="1"/>
<evidence type="ECO:0000269" key="2">
    <source>
    </source>
</evidence>
<evidence type="ECO:0000305" key="3"/>
<accession>Q9EV94</accession>
<accession>E3PXR7</accession>
<name>GRDE_ACESD</name>
<comment type="function">
    <text evidence="1">In the first step of glycine reductase, the substrate is bound to component PB via a Schiff base intermediate. Then the PB-activated substrate is nucleophilically attacked by the selenol anion of component PA to transform it to a carboxymethylated selenoether and the respective amine. By action of component PC, acetyl phosphate is formed, leaving component PA in its oxidized state. Finally component PA becomes reduced by the thioredoxin system to start a new catalytic cycle of reductive deamination (By similarity).</text>
</comment>
<comment type="catalytic activity">
    <reaction>
        <text>acetyl phosphate + [thioredoxin]-disulfide + NH4(+) + H2O = [thioredoxin]-dithiol + glycine + phosphate + H(+)</text>
        <dbReference type="Rhea" id="RHEA:12232"/>
        <dbReference type="Rhea" id="RHEA-COMP:10698"/>
        <dbReference type="Rhea" id="RHEA-COMP:10700"/>
        <dbReference type="ChEBI" id="CHEBI:15377"/>
        <dbReference type="ChEBI" id="CHEBI:15378"/>
        <dbReference type="ChEBI" id="CHEBI:22191"/>
        <dbReference type="ChEBI" id="CHEBI:28938"/>
        <dbReference type="ChEBI" id="CHEBI:29950"/>
        <dbReference type="ChEBI" id="CHEBI:43474"/>
        <dbReference type="ChEBI" id="CHEBI:50058"/>
        <dbReference type="ChEBI" id="CHEBI:57305"/>
        <dbReference type="EC" id="1.21.4.2"/>
    </reaction>
</comment>
<comment type="subunit">
    <text evidence="1">Heterohexamer of two alpha, two beta and two gamma subunits. Component of the glycine reductase complex, together with components A and C. PB is substrate specific (By similarity).</text>
</comment>
<comment type="PTM">
    <text evidence="1">The peptide chain is cleaved into beta and alpha chains, and the alpha chain N-terminal cysteine is deaminated and oxidized to form a reactive pyruvoyl group.</text>
</comment>
<comment type="miscellaneous">
    <text>The protein sequence in PubMed:11422384 comes from protein overexpressed and processed in E.coli.</text>
</comment>
<dbReference type="EC" id="1.21.4.2"/>
<dbReference type="EMBL" id="AJ276209">
    <property type="protein sequence ID" value="CAC14299.1"/>
    <property type="molecule type" value="Genomic_DNA"/>
</dbReference>
<dbReference type="EMBL" id="FP565809">
    <property type="protein sequence ID" value="CBH21232.1"/>
    <property type="molecule type" value="Genomic_DNA"/>
</dbReference>
<dbReference type="STRING" id="1511.CLOST_1110"/>
<dbReference type="KEGG" id="cst:CLOST_1110"/>
<dbReference type="eggNOG" id="ENOG502Z7RC">
    <property type="taxonomic scope" value="Bacteria"/>
</dbReference>
<dbReference type="HOGENOM" id="CLU_050376_0_0_9"/>
<dbReference type="Proteomes" id="UP000007041">
    <property type="component" value="Chromosome"/>
</dbReference>
<dbReference type="GO" id="GO:0030699">
    <property type="term" value="F:glycine reductase activity"/>
    <property type="evidence" value="ECO:0007669"/>
    <property type="project" value="UniProtKB-EC"/>
</dbReference>
<dbReference type="InterPro" id="IPR016585">
    <property type="entry name" value="Gly/sarc/bet_Rdtase_B_asu/bsu"/>
</dbReference>
<dbReference type="InterPro" id="IPR015417">
    <property type="entry name" value="Gly_reductase_pB_sua/b"/>
</dbReference>
<dbReference type="Pfam" id="PF09338">
    <property type="entry name" value="Gly_reductase"/>
    <property type="match status" value="1"/>
</dbReference>
<dbReference type="PIRSF" id="PIRSF011588">
    <property type="entry name" value="Gly_sarc_betain_red_a/b"/>
    <property type="match status" value="1"/>
</dbReference>
<sequence>MRLEVGNIFIKDIQFGDSTKVENGVLYVNKQELISELSSDEHIKSIDMEIVRPGESVRIAPVKDVIEPRVKVEGNGGIFPGFLSKVDTVGEGKTNVLKGAAVVTTGKVVGFQEGIIDMTGPGADYTPFSKTCNVVIIAEPVDGLKQHDHEAALRMVGLKAGKYLGEAGRNITPDEVKVYETKPIFESVKEYPNLPKVAYVYMLQTQGLLHDTYVYGVDAKKIIPTLIYPTEVMDGAILSGNCVSACDKNPTYVHMNNPVIHDLYELHGKEYNFVGVIITNENVYLADKERSSNWTAKMAEYLGLDGVIISEEGFGNPDTDLIMNCKKITKKGIKTVILTDEYAGRDGASQSLADADAAADACVTGGNANMTIVLPKLDKIIGHVSKDVIDVIAGGFDGSLRADGSIEVEIQAITGATSEVGFNKMTAKTY</sequence>
<feature type="chain" id="PRO_0000240008" description="Betaine reductase component B subunit beta">
    <location>
        <begin position="1"/>
        <end position="241"/>
    </location>
</feature>
<feature type="chain" id="PRO_0000240009" description="Betaine reductase component B subunit alpha">
    <location>
        <begin position="242"/>
        <end position="430"/>
    </location>
</feature>
<feature type="active site" description="Schiff-base intermediate with substrate; via pyruvic acid" evidence="3">
    <location>
        <position position="242"/>
    </location>
</feature>
<feature type="modified residue" description="Pyruvic acid (Cys)" evidence="3">
    <location>
        <position position="242"/>
    </location>
</feature>
<feature type="mutagenesis site" description="No in vitro processing occurs." evidence="2">
    <original>C</original>
    <variation>A</variation>
    <location>
        <position position="242"/>
    </location>
</feature>
<feature type="mutagenesis site" description="In vitro processing occurs more slowly than in wild-type." evidence="2">
    <original>C</original>
    <variation>S</variation>
    <variation>T</variation>
    <location>
        <position position="242"/>
    </location>
</feature>
<feature type="sequence conflict" description="In Ref. 3; AA sequence." evidence="3" ref="3">
    <original>T</original>
    <variation>S</variation>
    <location>
        <position position="251"/>
    </location>
</feature>
<reference key="1">
    <citation type="journal article" date="2001" name="Arch. Microbiol.">
        <title>Molecular analysis of the grd-operon encoded proteins of the glycine reductase and thioredoxin system from Clostridium sticklandii.</title>
        <authorList>
            <person name="Graentzdoerffer A."/>
            <person name="Pich A."/>
            <person name="Andreesen J.R."/>
        </authorList>
    </citation>
    <scope>NUCLEOTIDE SEQUENCE [GENOMIC DNA]</scope>
    <source>
        <strain>ATCC 12662 / DSM 519 / JCM 1433 / CCUG 9281 / NCIMB 10654 / HF</strain>
    </source>
</reference>
<reference key="2">
    <citation type="journal article" date="2010" name="BMC Genomics">
        <title>Clostridium sticklandii, a specialist in amino acid degradation:revisiting its metabolism through its genome sequence.</title>
        <authorList>
            <person name="Fonknechten N."/>
            <person name="Chaussonnerie S."/>
            <person name="Tricot S."/>
            <person name="Lajus A."/>
            <person name="Andreesen J.R."/>
            <person name="Perchat N."/>
            <person name="Pelletier E."/>
            <person name="Gouyvenoux M."/>
            <person name="Barbe V."/>
            <person name="Salanoubat M."/>
            <person name="Le Paslier D."/>
            <person name="Weissenbach J."/>
            <person name="Cohen G.N."/>
            <person name="Kreimeyer A."/>
        </authorList>
    </citation>
    <scope>NUCLEOTIDE SEQUENCE [LARGE SCALE GENOMIC DNA]</scope>
    <source>
        <strain>ATCC 12662 / DSM 519 / JCM 1433 / CCUG 9281 / NCIMB 10654 / HF</strain>
    </source>
</reference>
<reference key="3">
    <citation type="journal article" date="2001" name="Eur. J. Biochem.">
        <title>In vitro processing of the proproteins grdE of protein B of glycine reductase and prdA of D-proline reductase from Clostridium sticklandii: formation of a pyruvoyl group from a cysteine residue.</title>
        <authorList>
            <person name="Bednarski B."/>
            <person name="Andreesen J.R."/>
            <person name="Pich A."/>
        </authorList>
    </citation>
    <scope>PROTEIN SEQUENCE OF 1-10 AND 243-253</scope>
    <scope>PROTEOLYTIC PROCESSING IN VITRO</scope>
    <scope>MUTAGENESIS OF CYS-242</scope>
    <source>
        <strain>ATCC 12662 / DSM 519 / JCM 1433 / CCUG 9281 / NCIMB 10654 / HF</strain>
    </source>
</reference>
<organism>
    <name type="scientific">Acetoanaerobium sticklandii (strain ATCC 12662 / DSM 519 / JCM 1433 / CCUG 9281 / NCIMB 10654 / HF)</name>
    <name type="common">Clostridium sticklandii</name>
    <dbReference type="NCBI Taxonomy" id="499177"/>
    <lineage>
        <taxon>Bacteria</taxon>
        <taxon>Bacillati</taxon>
        <taxon>Bacillota</taxon>
        <taxon>Clostridia</taxon>
        <taxon>Peptostreptococcales</taxon>
        <taxon>Filifactoraceae</taxon>
        <taxon>Acetoanaerobium</taxon>
    </lineage>
</organism>